<reference key="1">
    <citation type="journal article" date="2002" name="Proc. Natl. Acad. Sci. U.S.A.">
        <title>Extensive mosaic structure revealed by the complete genome sequence of uropathogenic Escherichia coli.</title>
        <authorList>
            <person name="Welch R.A."/>
            <person name="Burland V."/>
            <person name="Plunkett G. III"/>
            <person name="Redford P."/>
            <person name="Roesch P."/>
            <person name="Rasko D."/>
            <person name="Buckles E.L."/>
            <person name="Liou S.-R."/>
            <person name="Boutin A."/>
            <person name="Hackett J."/>
            <person name="Stroud D."/>
            <person name="Mayhew G.F."/>
            <person name="Rose D.J."/>
            <person name="Zhou S."/>
            <person name="Schwartz D.C."/>
            <person name="Perna N.T."/>
            <person name="Mobley H.L.T."/>
            <person name="Donnenberg M.S."/>
            <person name="Blattner F.R."/>
        </authorList>
    </citation>
    <scope>NUCLEOTIDE SEQUENCE [LARGE SCALE GENOMIC DNA]</scope>
    <source>
        <strain>CFT073 / ATCC 700928 / UPEC</strain>
    </source>
</reference>
<protein>
    <recommendedName>
        <fullName evidence="1">Small heat shock protein IbpA</fullName>
    </recommendedName>
    <alternativeName>
        <fullName evidence="1">16 kDa heat shock protein A</fullName>
    </alternativeName>
</protein>
<feature type="chain" id="PRO_0000126019" description="Small heat shock protein IbpA">
    <location>
        <begin position="1"/>
        <end position="137"/>
    </location>
</feature>
<feature type="domain" description="sHSP" evidence="2">
    <location>
        <begin position="28"/>
        <end position="137"/>
    </location>
</feature>
<sequence length="137" mass="15774">MRNFDLSPLYRSAIGFDRLFNHLENNQSQSNGGYPPYNVELVDENHYRIAIAVAGFAESELEITAQDNLLVVKGAHADEQKERTYLYQGIAERNFERKFQLAENIHVRGANLVNGLLYIDLERVIPEAKKPRRIEIN</sequence>
<accession>P0C056</accession>
<accession>P29209</accession>
<keyword id="KW-0143">Chaperone</keyword>
<keyword id="KW-0963">Cytoplasm</keyword>
<keyword id="KW-1185">Reference proteome</keyword>
<keyword id="KW-0346">Stress response</keyword>
<name>IBPA_ECOL6</name>
<proteinExistence type="inferred from homology"/>
<gene>
    <name evidence="1" type="primary">ibpA</name>
    <name type="ordered locus">c4607</name>
</gene>
<comment type="function">
    <text evidence="1">Associates with aggregated proteins, together with IbpB, to stabilize and protect them from irreversible denaturation and extensive proteolysis during heat shock and oxidative stress. Aggregated proteins bound to the IbpAB complex are more efficiently refolded and reactivated by the ATP-dependent chaperone systems ClpB and DnaK/DnaJ/GrpE. Its activity is ATP-independent.</text>
</comment>
<comment type="subunit">
    <text evidence="1">Monomer. Forms homomultimers of about 100-150 subunits at optimal growth temperatures. Conformation changes to monomers at high temperatures or high ionic concentrations.</text>
</comment>
<comment type="subcellular location">
    <subcellularLocation>
        <location evidence="1">Cytoplasm</location>
    </subcellularLocation>
</comment>
<comment type="similarity">
    <text evidence="1 2">Belongs to the small heat shock protein (HSP20) family.</text>
</comment>
<comment type="sequence caution" evidence="3">
    <conflict type="erroneous initiation">
        <sequence resource="EMBL-CDS" id="AAN83042"/>
    </conflict>
</comment>
<dbReference type="EMBL" id="AE014075">
    <property type="protein sequence ID" value="AAN83042.1"/>
    <property type="status" value="ALT_INIT"/>
    <property type="molecule type" value="Genomic_DNA"/>
</dbReference>
<dbReference type="RefSeq" id="WP_001243437.1">
    <property type="nucleotide sequence ID" value="NZ_CP051263.1"/>
</dbReference>
<dbReference type="SMR" id="P0C056"/>
<dbReference type="STRING" id="199310.c4607"/>
<dbReference type="GeneID" id="93778428"/>
<dbReference type="KEGG" id="ecc:c4607"/>
<dbReference type="eggNOG" id="COG0071">
    <property type="taxonomic scope" value="Bacteria"/>
</dbReference>
<dbReference type="HOGENOM" id="CLU_046737_4_2_6"/>
<dbReference type="Proteomes" id="UP000001410">
    <property type="component" value="Chromosome"/>
</dbReference>
<dbReference type="GO" id="GO:0005737">
    <property type="term" value="C:cytoplasm"/>
    <property type="evidence" value="ECO:0007669"/>
    <property type="project" value="UniProtKB-SubCell"/>
</dbReference>
<dbReference type="GO" id="GO:0050821">
    <property type="term" value="P:protein stabilization"/>
    <property type="evidence" value="ECO:0007669"/>
    <property type="project" value="UniProtKB-UniRule"/>
</dbReference>
<dbReference type="CDD" id="cd06470">
    <property type="entry name" value="ACD_IbpA-B_like"/>
    <property type="match status" value="1"/>
</dbReference>
<dbReference type="FunFam" id="2.60.40.790:FF:000002">
    <property type="entry name" value="Small heat shock protein IbpA"/>
    <property type="match status" value="1"/>
</dbReference>
<dbReference type="Gene3D" id="2.60.40.790">
    <property type="match status" value="1"/>
</dbReference>
<dbReference type="HAMAP" id="MF_02000">
    <property type="entry name" value="HSP20_IbpA"/>
    <property type="match status" value="1"/>
</dbReference>
<dbReference type="InterPro" id="IPR002068">
    <property type="entry name" value="A-crystallin/Hsp20_dom"/>
</dbReference>
<dbReference type="InterPro" id="IPR037913">
    <property type="entry name" value="ACD_IbpA/B"/>
</dbReference>
<dbReference type="InterPro" id="IPR008978">
    <property type="entry name" value="HSP20-like_chaperone"/>
</dbReference>
<dbReference type="InterPro" id="IPR023728">
    <property type="entry name" value="HSP20_IbpA"/>
</dbReference>
<dbReference type="NCBIfam" id="NF008013">
    <property type="entry name" value="PRK10743.1"/>
    <property type="match status" value="1"/>
</dbReference>
<dbReference type="PANTHER" id="PTHR47062">
    <property type="match status" value="1"/>
</dbReference>
<dbReference type="PANTHER" id="PTHR47062:SF1">
    <property type="entry name" value="SMALL HEAT SHOCK PROTEIN IBPA"/>
    <property type="match status" value="1"/>
</dbReference>
<dbReference type="Pfam" id="PF00011">
    <property type="entry name" value="HSP20"/>
    <property type="match status" value="1"/>
</dbReference>
<dbReference type="SUPFAM" id="SSF49764">
    <property type="entry name" value="HSP20-like chaperones"/>
    <property type="match status" value="1"/>
</dbReference>
<dbReference type="PROSITE" id="PS01031">
    <property type="entry name" value="SHSP"/>
    <property type="match status" value="1"/>
</dbReference>
<evidence type="ECO:0000255" key="1">
    <source>
        <dbReference type="HAMAP-Rule" id="MF_02000"/>
    </source>
</evidence>
<evidence type="ECO:0000255" key="2">
    <source>
        <dbReference type="PROSITE-ProRule" id="PRU00285"/>
    </source>
</evidence>
<evidence type="ECO:0000305" key="3"/>
<organism>
    <name type="scientific">Escherichia coli O6:H1 (strain CFT073 / ATCC 700928 / UPEC)</name>
    <dbReference type="NCBI Taxonomy" id="199310"/>
    <lineage>
        <taxon>Bacteria</taxon>
        <taxon>Pseudomonadati</taxon>
        <taxon>Pseudomonadota</taxon>
        <taxon>Gammaproteobacteria</taxon>
        <taxon>Enterobacterales</taxon>
        <taxon>Enterobacteriaceae</taxon>
        <taxon>Escherichia</taxon>
    </lineage>
</organism>